<protein>
    <recommendedName>
        <fullName evidence="1">Protein nucleotidyltransferase YdiU</fullName>
        <ecNumber evidence="1">2.7.7.-</ecNumber>
    </recommendedName>
    <alternativeName>
        <fullName evidence="1">Protein adenylyltransferase YdiU</fullName>
        <ecNumber evidence="1">2.7.7.108</ecNumber>
    </alternativeName>
    <alternativeName>
        <fullName evidence="1">Protein uridylyltransferase YdiU</fullName>
        <ecNumber evidence="1">2.7.7.-</ecNumber>
    </alternativeName>
</protein>
<organism>
    <name type="scientific">Pseudoalteromonas translucida (strain TAC 125)</name>
    <dbReference type="NCBI Taxonomy" id="326442"/>
    <lineage>
        <taxon>Bacteria</taxon>
        <taxon>Pseudomonadati</taxon>
        <taxon>Pseudomonadota</taxon>
        <taxon>Gammaproteobacteria</taxon>
        <taxon>Alteromonadales</taxon>
        <taxon>Pseudoalteromonadaceae</taxon>
        <taxon>Pseudoalteromonas</taxon>
    </lineage>
</organism>
<name>SELO_PSET1</name>
<sequence length="469" mass="51774">MNLMPRYRQVADNFAIEDRPSKVAAPQLLLWNDSLAKAFNINVVPELRASTFSGNEQQAIAAVALGYSGHQFGHFSPRLGDGRAHLLGAVEDAQNQLWDIQLKGSGATPYSRGGDGRCALGPAIREYIMSEAMQALGIKTTRCLAVVGSGETVYRNPPQPGAIVTRLASSHIRVGSFQYLATQGDVAGLKNLADLAIERHYPKIQATGPERYLAFLAAVIKNQVELVVSWMRVGFIHGVMNTDNTLVSGETIDYGPCAMMNSFDFDTVFSSIDKQGRYAFGNQPNIANWNCARLAESLIPLVNDDDEQAVALMTPIIDGFAEQFNVEFSAMWATKLGLAGTDTADKELIAELLQLLKEHQLDYTNTFDALTESLTGGMSIPEVLVQWAGKWQKRTDDRSYTVMRAANPRVIPRNHVIEKILSEYNKTGSSELLHEFMQVMHTPYENTDKLAKFQDAPSSDKEYYTFCGT</sequence>
<dbReference type="EC" id="2.7.7.-" evidence="1"/>
<dbReference type="EC" id="2.7.7.108" evidence="1"/>
<dbReference type="EMBL" id="CR954246">
    <property type="protein sequence ID" value="CAI85285.1"/>
    <property type="molecule type" value="Genomic_DNA"/>
</dbReference>
<dbReference type="SMR" id="Q3IJ32"/>
<dbReference type="STRING" id="326442.PSHAa0182"/>
<dbReference type="KEGG" id="pha:PSHAa0182"/>
<dbReference type="PATRIC" id="fig|326442.8.peg.175"/>
<dbReference type="eggNOG" id="COG0397">
    <property type="taxonomic scope" value="Bacteria"/>
</dbReference>
<dbReference type="HOGENOM" id="CLU_010245_4_1_6"/>
<dbReference type="BioCyc" id="PHAL326442:PSHA_RS00915-MONOMER"/>
<dbReference type="Proteomes" id="UP000006843">
    <property type="component" value="Chromosome I"/>
</dbReference>
<dbReference type="GO" id="GO:0070733">
    <property type="term" value="F:AMPylase activity"/>
    <property type="evidence" value="ECO:0007669"/>
    <property type="project" value="RHEA"/>
</dbReference>
<dbReference type="GO" id="GO:0005524">
    <property type="term" value="F:ATP binding"/>
    <property type="evidence" value="ECO:0007669"/>
    <property type="project" value="UniProtKB-UniRule"/>
</dbReference>
<dbReference type="GO" id="GO:0000287">
    <property type="term" value="F:magnesium ion binding"/>
    <property type="evidence" value="ECO:0007669"/>
    <property type="project" value="UniProtKB-UniRule"/>
</dbReference>
<dbReference type="HAMAP" id="MF_00692">
    <property type="entry name" value="YdiU_SelO"/>
    <property type="match status" value="1"/>
</dbReference>
<dbReference type="InterPro" id="IPR003846">
    <property type="entry name" value="SelO"/>
</dbReference>
<dbReference type="NCBIfam" id="NF000658">
    <property type="entry name" value="PRK00029.1"/>
    <property type="match status" value="1"/>
</dbReference>
<dbReference type="PANTHER" id="PTHR32057">
    <property type="entry name" value="PROTEIN ADENYLYLTRANSFERASE SELO, MITOCHONDRIAL"/>
    <property type="match status" value="1"/>
</dbReference>
<dbReference type="PANTHER" id="PTHR32057:SF14">
    <property type="entry name" value="PROTEIN ADENYLYLTRANSFERASE SELO, MITOCHONDRIAL"/>
    <property type="match status" value="1"/>
</dbReference>
<dbReference type="Pfam" id="PF02696">
    <property type="entry name" value="SelO"/>
    <property type="match status" value="1"/>
</dbReference>
<comment type="function">
    <text evidence="1">Nucleotidyltransferase involved in the post-translational modification of proteins. It can catalyze the addition of adenosine monophosphate (AMP) or uridine monophosphate (UMP) to a protein, resulting in modifications known as AMPylation and UMPylation.</text>
</comment>
<comment type="catalytic activity">
    <reaction evidence="1">
        <text>L-seryl-[protein] + ATP = 3-O-(5'-adenylyl)-L-seryl-[protein] + diphosphate</text>
        <dbReference type="Rhea" id="RHEA:58120"/>
        <dbReference type="Rhea" id="RHEA-COMP:9863"/>
        <dbReference type="Rhea" id="RHEA-COMP:15073"/>
        <dbReference type="ChEBI" id="CHEBI:29999"/>
        <dbReference type="ChEBI" id="CHEBI:30616"/>
        <dbReference type="ChEBI" id="CHEBI:33019"/>
        <dbReference type="ChEBI" id="CHEBI:142516"/>
        <dbReference type="EC" id="2.7.7.108"/>
    </reaction>
</comment>
<comment type="catalytic activity">
    <reaction evidence="1">
        <text>L-threonyl-[protein] + ATP = 3-O-(5'-adenylyl)-L-threonyl-[protein] + diphosphate</text>
        <dbReference type="Rhea" id="RHEA:54292"/>
        <dbReference type="Rhea" id="RHEA-COMP:11060"/>
        <dbReference type="Rhea" id="RHEA-COMP:13847"/>
        <dbReference type="ChEBI" id="CHEBI:30013"/>
        <dbReference type="ChEBI" id="CHEBI:30616"/>
        <dbReference type="ChEBI" id="CHEBI:33019"/>
        <dbReference type="ChEBI" id="CHEBI:138113"/>
        <dbReference type="EC" id="2.7.7.108"/>
    </reaction>
</comment>
<comment type="catalytic activity">
    <reaction evidence="1">
        <text>L-tyrosyl-[protein] + ATP = O-(5'-adenylyl)-L-tyrosyl-[protein] + diphosphate</text>
        <dbReference type="Rhea" id="RHEA:54288"/>
        <dbReference type="Rhea" id="RHEA-COMP:10136"/>
        <dbReference type="Rhea" id="RHEA-COMP:13846"/>
        <dbReference type="ChEBI" id="CHEBI:30616"/>
        <dbReference type="ChEBI" id="CHEBI:33019"/>
        <dbReference type="ChEBI" id="CHEBI:46858"/>
        <dbReference type="ChEBI" id="CHEBI:83624"/>
        <dbReference type="EC" id="2.7.7.108"/>
    </reaction>
</comment>
<comment type="catalytic activity">
    <reaction evidence="1">
        <text>L-histidyl-[protein] + UTP = N(tele)-(5'-uridylyl)-L-histidyl-[protein] + diphosphate</text>
        <dbReference type="Rhea" id="RHEA:83891"/>
        <dbReference type="Rhea" id="RHEA-COMP:9745"/>
        <dbReference type="Rhea" id="RHEA-COMP:20239"/>
        <dbReference type="ChEBI" id="CHEBI:29979"/>
        <dbReference type="ChEBI" id="CHEBI:33019"/>
        <dbReference type="ChEBI" id="CHEBI:46398"/>
        <dbReference type="ChEBI" id="CHEBI:233474"/>
    </reaction>
</comment>
<comment type="catalytic activity">
    <reaction evidence="1">
        <text>L-seryl-[protein] + UTP = O-(5'-uridylyl)-L-seryl-[protein] + diphosphate</text>
        <dbReference type="Rhea" id="RHEA:64604"/>
        <dbReference type="Rhea" id="RHEA-COMP:9863"/>
        <dbReference type="Rhea" id="RHEA-COMP:16635"/>
        <dbReference type="ChEBI" id="CHEBI:29999"/>
        <dbReference type="ChEBI" id="CHEBI:33019"/>
        <dbReference type="ChEBI" id="CHEBI:46398"/>
        <dbReference type="ChEBI" id="CHEBI:156051"/>
    </reaction>
</comment>
<comment type="catalytic activity">
    <reaction evidence="1">
        <text>L-tyrosyl-[protein] + UTP = O-(5'-uridylyl)-L-tyrosyl-[protein] + diphosphate</text>
        <dbReference type="Rhea" id="RHEA:83887"/>
        <dbReference type="Rhea" id="RHEA-COMP:10136"/>
        <dbReference type="Rhea" id="RHEA-COMP:20238"/>
        <dbReference type="ChEBI" id="CHEBI:33019"/>
        <dbReference type="ChEBI" id="CHEBI:46398"/>
        <dbReference type="ChEBI" id="CHEBI:46858"/>
        <dbReference type="ChEBI" id="CHEBI:90602"/>
    </reaction>
</comment>
<comment type="cofactor">
    <cofactor evidence="1">
        <name>Mg(2+)</name>
        <dbReference type="ChEBI" id="CHEBI:18420"/>
    </cofactor>
    <cofactor evidence="1">
        <name>Mn(2+)</name>
        <dbReference type="ChEBI" id="CHEBI:29035"/>
    </cofactor>
</comment>
<comment type="similarity">
    <text evidence="1">Belongs to the SELO family.</text>
</comment>
<evidence type="ECO:0000255" key="1">
    <source>
        <dbReference type="HAMAP-Rule" id="MF_00692"/>
    </source>
</evidence>
<gene>
    <name evidence="1" type="primary">ydiU</name>
    <name evidence="1" type="synonym">selO</name>
    <name type="ordered locus">PSHAa0182</name>
</gene>
<proteinExistence type="inferred from homology"/>
<keyword id="KW-0067">ATP-binding</keyword>
<keyword id="KW-0460">Magnesium</keyword>
<keyword id="KW-0464">Manganese</keyword>
<keyword id="KW-0479">Metal-binding</keyword>
<keyword id="KW-0547">Nucleotide-binding</keyword>
<keyword id="KW-0548">Nucleotidyltransferase</keyword>
<keyword id="KW-1185">Reference proteome</keyword>
<keyword id="KW-0808">Transferase</keyword>
<accession>Q3IJ32</accession>
<reference key="1">
    <citation type="journal article" date="2005" name="Genome Res.">
        <title>Coping with cold: the genome of the versatile marine Antarctica bacterium Pseudoalteromonas haloplanktis TAC125.</title>
        <authorList>
            <person name="Medigue C."/>
            <person name="Krin E."/>
            <person name="Pascal G."/>
            <person name="Barbe V."/>
            <person name="Bernsel A."/>
            <person name="Bertin P.N."/>
            <person name="Cheung F."/>
            <person name="Cruveiller S."/>
            <person name="D'Amico S."/>
            <person name="Duilio A."/>
            <person name="Fang G."/>
            <person name="Feller G."/>
            <person name="Ho C."/>
            <person name="Mangenot S."/>
            <person name="Marino G."/>
            <person name="Nilsson J."/>
            <person name="Parrilli E."/>
            <person name="Rocha E.P.C."/>
            <person name="Rouy Z."/>
            <person name="Sekowska A."/>
            <person name="Tutino M.L."/>
            <person name="Vallenet D."/>
            <person name="von Heijne G."/>
            <person name="Danchin A."/>
        </authorList>
    </citation>
    <scope>NUCLEOTIDE SEQUENCE [LARGE SCALE GENOMIC DNA]</scope>
    <source>
        <strain>TAC 125</strain>
    </source>
</reference>
<feature type="chain" id="PRO_0000271845" description="Protein nucleotidyltransferase YdiU">
    <location>
        <begin position="1"/>
        <end position="469"/>
    </location>
</feature>
<feature type="active site" description="Proton acceptor" evidence="1">
    <location>
        <position position="243"/>
    </location>
</feature>
<feature type="binding site" evidence="1">
    <location>
        <position position="80"/>
    </location>
    <ligand>
        <name>ATP</name>
        <dbReference type="ChEBI" id="CHEBI:30616"/>
    </ligand>
</feature>
<feature type="binding site" evidence="1">
    <location>
        <position position="82"/>
    </location>
    <ligand>
        <name>ATP</name>
        <dbReference type="ChEBI" id="CHEBI:30616"/>
    </ligand>
</feature>
<feature type="binding site" evidence="1">
    <location>
        <position position="83"/>
    </location>
    <ligand>
        <name>ATP</name>
        <dbReference type="ChEBI" id="CHEBI:30616"/>
    </ligand>
</feature>
<feature type="binding site" evidence="1">
    <location>
        <position position="103"/>
    </location>
    <ligand>
        <name>ATP</name>
        <dbReference type="ChEBI" id="CHEBI:30616"/>
    </ligand>
</feature>
<feature type="binding site" evidence="1">
    <location>
        <position position="115"/>
    </location>
    <ligand>
        <name>ATP</name>
        <dbReference type="ChEBI" id="CHEBI:30616"/>
    </ligand>
</feature>
<feature type="binding site" evidence="1">
    <location>
        <position position="116"/>
    </location>
    <ligand>
        <name>ATP</name>
        <dbReference type="ChEBI" id="CHEBI:30616"/>
    </ligand>
</feature>
<feature type="binding site" evidence="1">
    <location>
        <position position="166"/>
    </location>
    <ligand>
        <name>ATP</name>
        <dbReference type="ChEBI" id="CHEBI:30616"/>
    </ligand>
</feature>
<feature type="binding site" evidence="1">
    <location>
        <position position="173"/>
    </location>
    <ligand>
        <name>ATP</name>
        <dbReference type="ChEBI" id="CHEBI:30616"/>
    </ligand>
</feature>
<feature type="binding site" evidence="1">
    <location>
        <position position="244"/>
    </location>
    <ligand>
        <name>Mg(2+)</name>
        <dbReference type="ChEBI" id="CHEBI:18420"/>
    </ligand>
</feature>
<feature type="binding site" evidence="1">
    <location>
        <position position="253"/>
    </location>
    <ligand>
        <name>ATP</name>
        <dbReference type="ChEBI" id="CHEBI:30616"/>
    </ligand>
</feature>
<feature type="binding site" evidence="1">
    <location>
        <position position="253"/>
    </location>
    <ligand>
        <name>Mg(2+)</name>
        <dbReference type="ChEBI" id="CHEBI:18420"/>
    </ligand>
</feature>